<evidence type="ECO:0000255" key="1">
    <source>
        <dbReference type="HAMAP-Rule" id="MF_01522"/>
    </source>
</evidence>
<evidence type="ECO:0000256" key="2">
    <source>
        <dbReference type="SAM" id="MobiDB-lite"/>
    </source>
</evidence>
<proteinExistence type="inferred from homology"/>
<name>KUP_GLUOX</name>
<comment type="function">
    <text evidence="1">Transport of potassium into the cell. Likely operates as a K(+):H(+) symporter.</text>
</comment>
<comment type="catalytic activity">
    <reaction evidence="1">
        <text>K(+)(in) + H(+)(in) = K(+)(out) + H(+)(out)</text>
        <dbReference type="Rhea" id="RHEA:28490"/>
        <dbReference type="ChEBI" id="CHEBI:15378"/>
        <dbReference type="ChEBI" id="CHEBI:29103"/>
    </reaction>
    <physiologicalReaction direction="right-to-left" evidence="1">
        <dbReference type="Rhea" id="RHEA:28492"/>
    </physiologicalReaction>
</comment>
<comment type="subcellular location">
    <subcellularLocation>
        <location evidence="1">Cell inner membrane</location>
        <topology evidence="1">Multi-pass membrane protein</topology>
    </subcellularLocation>
</comment>
<comment type="similarity">
    <text evidence="1">Belongs to the HAK/KUP transporter (TC 2.A.72) family.</text>
</comment>
<keyword id="KW-0997">Cell inner membrane</keyword>
<keyword id="KW-1003">Cell membrane</keyword>
<keyword id="KW-0406">Ion transport</keyword>
<keyword id="KW-0472">Membrane</keyword>
<keyword id="KW-0630">Potassium</keyword>
<keyword id="KW-0633">Potassium transport</keyword>
<keyword id="KW-1185">Reference proteome</keyword>
<keyword id="KW-0769">Symport</keyword>
<keyword id="KW-0812">Transmembrane</keyword>
<keyword id="KW-1133">Transmembrane helix</keyword>
<keyword id="KW-0813">Transport</keyword>
<protein>
    <recommendedName>
        <fullName evidence="1">Probable potassium transport system protein Kup</fullName>
    </recommendedName>
</protein>
<gene>
    <name evidence="1" type="primary">kup</name>
    <name type="ordered locus">GOX1595</name>
</gene>
<dbReference type="EMBL" id="CP000009">
    <property type="protein sequence ID" value="AAW61336.1"/>
    <property type="molecule type" value="Genomic_DNA"/>
</dbReference>
<dbReference type="RefSeq" id="WP_011253119.1">
    <property type="nucleotide sequence ID" value="NC_006677.1"/>
</dbReference>
<dbReference type="STRING" id="290633.GOX1595"/>
<dbReference type="KEGG" id="gox:GOX1595"/>
<dbReference type="eggNOG" id="COG3158">
    <property type="taxonomic scope" value="Bacteria"/>
</dbReference>
<dbReference type="HOGENOM" id="CLU_008142_4_2_5"/>
<dbReference type="Proteomes" id="UP000006375">
    <property type="component" value="Chromosome"/>
</dbReference>
<dbReference type="GO" id="GO:0005886">
    <property type="term" value="C:plasma membrane"/>
    <property type="evidence" value="ECO:0007669"/>
    <property type="project" value="UniProtKB-SubCell"/>
</dbReference>
<dbReference type="GO" id="GO:0015079">
    <property type="term" value="F:potassium ion transmembrane transporter activity"/>
    <property type="evidence" value="ECO:0007669"/>
    <property type="project" value="UniProtKB-UniRule"/>
</dbReference>
<dbReference type="GO" id="GO:0015293">
    <property type="term" value="F:symporter activity"/>
    <property type="evidence" value="ECO:0007669"/>
    <property type="project" value="UniProtKB-UniRule"/>
</dbReference>
<dbReference type="HAMAP" id="MF_01522">
    <property type="entry name" value="Kup"/>
    <property type="match status" value="1"/>
</dbReference>
<dbReference type="InterPro" id="IPR003855">
    <property type="entry name" value="K+_transporter"/>
</dbReference>
<dbReference type="InterPro" id="IPR053952">
    <property type="entry name" value="K_trans_C"/>
</dbReference>
<dbReference type="InterPro" id="IPR053951">
    <property type="entry name" value="K_trans_N"/>
</dbReference>
<dbReference type="InterPro" id="IPR023051">
    <property type="entry name" value="Kup"/>
</dbReference>
<dbReference type="PANTHER" id="PTHR30540:SF79">
    <property type="entry name" value="LOW AFFINITY POTASSIUM TRANSPORT SYSTEM PROTEIN KUP"/>
    <property type="match status" value="1"/>
</dbReference>
<dbReference type="PANTHER" id="PTHR30540">
    <property type="entry name" value="OSMOTIC STRESS POTASSIUM TRANSPORTER"/>
    <property type="match status" value="1"/>
</dbReference>
<dbReference type="Pfam" id="PF02705">
    <property type="entry name" value="K_trans"/>
    <property type="match status" value="1"/>
</dbReference>
<dbReference type="Pfam" id="PF22776">
    <property type="entry name" value="K_trans_C"/>
    <property type="match status" value="1"/>
</dbReference>
<reference key="1">
    <citation type="journal article" date="2005" name="Nat. Biotechnol.">
        <title>Complete genome sequence of the acetic acid bacterium Gluconobacter oxydans.</title>
        <authorList>
            <person name="Prust C."/>
            <person name="Hoffmeister M."/>
            <person name="Liesegang H."/>
            <person name="Wiezer A."/>
            <person name="Fricke W.F."/>
            <person name="Ehrenreich A."/>
            <person name="Gottschalk G."/>
            <person name="Deppenmeier U."/>
        </authorList>
    </citation>
    <scope>NUCLEOTIDE SEQUENCE [LARGE SCALE GENOMIC DNA]</scope>
    <source>
        <strain>621H</strain>
    </source>
</reference>
<accession>Q5FQL0</accession>
<organism>
    <name type="scientific">Gluconobacter oxydans (strain 621H)</name>
    <name type="common">Gluconobacter suboxydans</name>
    <dbReference type="NCBI Taxonomy" id="290633"/>
    <lineage>
        <taxon>Bacteria</taxon>
        <taxon>Pseudomonadati</taxon>
        <taxon>Pseudomonadota</taxon>
        <taxon>Alphaproteobacteria</taxon>
        <taxon>Acetobacterales</taxon>
        <taxon>Acetobacteraceae</taxon>
        <taxon>Gluconobacter</taxon>
    </lineage>
</organism>
<feature type="chain" id="PRO_0000209019" description="Probable potassium transport system protein Kup">
    <location>
        <begin position="1"/>
        <end position="675"/>
    </location>
</feature>
<feature type="transmembrane region" description="Helical" evidence="1">
    <location>
        <begin position="62"/>
        <end position="82"/>
    </location>
</feature>
<feature type="transmembrane region" description="Helical" evidence="1">
    <location>
        <begin position="104"/>
        <end position="124"/>
    </location>
</feature>
<feature type="transmembrane region" description="Helical" evidence="1">
    <location>
        <begin position="153"/>
        <end position="173"/>
    </location>
</feature>
<feature type="transmembrane region" description="Helical" evidence="1">
    <location>
        <begin position="195"/>
        <end position="215"/>
    </location>
</feature>
<feature type="transmembrane region" description="Helical" evidence="1">
    <location>
        <begin position="222"/>
        <end position="242"/>
    </location>
</feature>
<feature type="transmembrane region" description="Helical" evidence="1">
    <location>
        <begin position="255"/>
        <end position="275"/>
    </location>
</feature>
<feature type="transmembrane region" description="Helical" evidence="1">
    <location>
        <begin position="300"/>
        <end position="320"/>
    </location>
</feature>
<feature type="transmembrane region" description="Helical" evidence="1">
    <location>
        <begin position="332"/>
        <end position="352"/>
    </location>
</feature>
<feature type="transmembrane region" description="Helical" evidence="1">
    <location>
        <begin position="390"/>
        <end position="410"/>
    </location>
</feature>
<feature type="transmembrane region" description="Helical" evidence="1">
    <location>
        <begin position="419"/>
        <end position="439"/>
    </location>
</feature>
<feature type="transmembrane region" description="Helical" evidence="1">
    <location>
        <begin position="450"/>
        <end position="470"/>
    </location>
</feature>
<feature type="transmembrane region" description="Helical" evidence="1">
    <location>
        <begin position="472"/>
        <end position="492"/>
    </location>
</feature>
<feature type="region of interest" description="Disordered" evidence="2">
    <location>
        <begin position="1"/>
        <end position="25"/>
    </location>
</feature>
<feature type="compositionally biased region" description="Basic and acidic residues" evidence="2">
    <location>
        <begin position="1"/>
        <end position="12"/>
    </location>
</feature>
<sequence>MEPAMPEHDGDHASNPPHGVGIPNDSAGIVQTIEQARSEGHTHEIGGGEEGSGHERPAGMGALLAVLGVVYGDIGTSPLYALQSSVSIVSSPKAPAQPWEIMGLASLTFWALMLIVTIKYVILIMRADHDGEGGIIALMSLAQRVCKSQHFRWLFGLVGIAGTCLFFGDSIITPAISVLSAVEGIETSVPSASHIIIPLAMVVLVALFSVQVLGTGKIGKAFGPIMVCWFSVLAILGIKGIFLYPHILLALSPTFALEFIVLHGYLSFIALGSVVLSVTGAEALYADMGHFGRAPIRKAWLFFVLPSLTLNYFGQAALLIRDPHALSNPFYLLVPHWAQIPMLVLATFATVIASQAGISGSFSLCRQLIQLGYLPRTRIMHTNASEEAQIYLPSLNWILAFGALVLVLAFRTSSALAAAYGIAVTGTFLCTCVLAMVVFRRVFKWKSATVAIVFGFFFIVDSIFFSANVLKIPDGGWVPLAIGIISTIIMTTWKRGRSLIAARQQADSMPMGSFLARLPQSRTIRVPGLAVFLTANPDIVPNSLLHNLKHNKVLHDHILFVTVENLDQPEAERGHRAIVQELAPNIHRVIVRYGFMEMPNLPRALLELNALGVAFDAIQASYFTSHELVVRSRVPKMQLWRMWIFLFLLRNAASTTEFLRIPPDRVVEFGVRIAI</sequence>